<gene>
    <name evidence="2" type="primary">trmB</name>
    <name type="ordered locus">MYPE2880</name>
</gene>
<name>TRMB_MALP2</name>
<reference key="1">
    <citation type="journal article" date="2002" name="Nucleic Acids Res.">
        <title>The complete genomic sequence of Mycoplasma penetrans, an intracellular bacterial pathogen in humans.</title>
        <authorList>
            <person name="Sasaki Y."/>
            <person name="Ishikawa J."/>
            <person name="Yamashita A."/>
            <person name="Oshima K."/>
            <person name="Kenri T."/>
            <person name="Furuya K."/>
            <person name="Yoshino C."/>
            <person name="Horino A."/>
            <person name="Shiba T."/>
            <person name="Sasaki T."/>
            <person name="Hattori M."/>
        </authorList>
    </citation>
    <scope>NUCLEOTIDE SEQUENCE [LARGE SCALE GENOMIC DNA]</scope>
    <source>
        <strain>HF-2</strain>
    </source>
</reference>
<comment type="function">
    <text evidence="2">Catalyzes the formation of N(7)-methylguanine at position 46 (m7G46) in tRNA.</text>
</comment>
<comment type="catalytic activity">
    <reaction evidence="2">
        <text>guanosine(46) in tRNA + S-adenosyl-L-methionine = N(7)-methylguanosine(46) in tRNA + S-adenosyl-L-homocysteine</text>
        <dbReference type="Rhea" id="RHEA:42708"/>
        <dbReference type="Rhea" id="RHEA-COMP:10188"/>
        <dbReference type="Rhea" id="RHEA-COMP:10189"/>
        <dbReference type="ChEBI" id="CHEBI:57856"/>
        <dbReference type="ChEBI" id="CHEBI:59789"/>
        <dbReference type="ChEBI" id="CHEBI:74269"/>
        <dbReference type="ChEBI" id="CHEBI:74480"/>
        <dbReference type="EC" id="2.1.1.33"/>
    </reaction>
</comment>
<comment type="pathway">
    <text evidence="2">tRNA modification; N(7)-methylguanine-tRNA biosynthesis.</text>
</comment>
<comment type="similarity">
    <text evidence="2">Belongs to the class I-like SAM-binding methyltransferase superfamily. TrmB family.</text>
</comment>
<protein>
    <recommendedName>
        <fullName evidence="2">tRNA (guanine-N(7)-)-methyltransferase</fullName>
        <ecNumber evidence="2">2.1.1.33</ecNumber>
    </recommendedName>
    <alternativeName>
        <fullName evidence="2">tRNA (guanine(46)-N(7))-methyltransferase</fullName>
    </alternativeName>
    <alternativeName>
        <fullName evidence="2">tRNA(m7G46)-methyltransferase</fullName>
    </alternativeName>
</protein>
<proteinExistence type="inferred from homology"/>
<feature type="chain" id="PRO_0000171358" description="tRNA (guanine-N(7)-)-methyltransferase">
    <location>
        <begin position="1"/>
        <end position="220"/>
    </location>
</feature>
<feature type="active site" evidence="1">
    <location>
        <position position="122"/>
    </location>
</feature>
<feature type="binding site" evidence="2">
    <location>
        <position position="46"/>
    </location>
    <ligand>
        <name>S-adenosyl-L-methionine</name>
        <dbReference type="ChEBI" id="CHEBI:59789"/>
    </ligand>
</feature>
<feature type="binding site" evidence="2">
    <location>
        <position position="71"/>
    </location>
    <ligand>
        <name>S-adenosyl-L-methionine</name>
        <dbReference type="ChEBI" id="CHEBI:59789"/>
    </ligand>
</feature>
<feature type="binding site" evidence="2">
    <location>
        <position position="100"/>
    </location>
    <ligand>
        <name>S-adenosyl-L-methionine</name>
        <dbReference type="ChEBI" id="CHEBI:59789"/>
    </ligand>
</feature>
<feature type="binding site" evidence="2">
    <location>
        <position position="122"/>
    </location>
    <ligand>
        <name>S-adenosyl-L-methionine</name>
        <dbReference type="ChEBI" id="CHEBI:59789"/>
    </ligand>
</feature>
<feature type="binding site" evidence="2">
    <location>
        <position position="126"/>
    </location>
    <ligand>
        <name>substrate</name>
    </ligand>
</feature>
<feature type="binding site" evidence="2">
    <location>
        <position position="158"/>
    </location>
    <ligand>
        <name>substrate</name>
    </ligand>
</feature>
<feature type="binding site" evidence="2">
    <location>
        <begin position="196"/>
        <end position="199"/>
    </location>
    <ligand>
        <name>substrate</name>
    </ligand>
</feature>
<sequence length="220" mass="25889">MGRLRKDYQDELRLFNSQEFYVLNPNQYKGLWNQQIFKNNNNIEIEVGTGKGTFIFNKALKNKNINFIAIDKYPTILAKLLNKLESCSETLTNIKIISIDAKNINDIFDKSEISKIYLNFVDPWPKTHHEKFRLTNSFYLNLFLPLLKQDGLIEFKTDNLNFFNYSLSVARENSFCLTFATKNLYSSAHAKDNIQTEYERKWSNRGYKINKLVIKNNISQ</sequence>
<accession>Q8EWB6</accession>
<organism>
    <name type="scientific">Malacoplasma penetrans (strain HF-2)</name>
    <name type="common">Mycoplasma penetrans</name>
    <dbReference type="NCBI Taxonomy" id="272633"/>
    <lineage>
        <taxon>Bacteria</taxon>
        <taxon>Bacillati</taxon>
        <taxon>Mycoplasmatota</taxon>
        <taxon>Mycoplasmoidales</taxon>
        <taxon>Mycoplasmoidaceae</taxon>
        <taxon>Malacoplasma</taxon>
    </lineage>
</organism>
<keyword id="KW-0489">Methyltransferase</keyword>
<keyword id="KW-1185">Reference proteome</keyword>
<keyword id="KW-0949">S-adenosyl-L-methionine</keyword>
<keyword id="KW-0808">Transferase</keyword>
<keyword id="KW-0819">tRNA processing</keyword>
<dbReference type="EC" id="2.1.1.33" evidence="2"/>
<dbReference type="EMBL" id="BA000026">
    <property type="protein sequence ID" value="BAC44080.1"/>
    <property type="molecule type" value="Genomic_DNA"/>
</dbReference>
<dbReference type="RefSeq" id="WP_011077116.1">
    <property type="nucleotide sequence ID" value="NC_004432.1"/>
</dbReference>
<dbReference type="SMR" id="Q8EWB6"/>
<dbReference type="FunCoup" id="Q8EWB6">
    <property type="interactions" value="196"/>
</dbReference>
<dbReference type="STRING" id="272633.gene:10731391"/>
<dbReference type="KEGG" id="mpe:MYPE2880"/>
<dbReference type="eggNOG" id="COG0220">
    <property type="taxonomic scope" value="Bacteria"/>
</dbReference>
<dbReference type="HOGENOM" id="CLU_050910_2_1_14"/>
<dbReference type="InParanoid" id="Q8EWB6"/>
<dbReference type="UniPathway" id="UPA00989"/>
<dbReference type="Proteomes" id="UP000002522">
    <property type="component" value="Chromosome"/>
</dbReference>
<dbReference type="GO" id="GO:0043527">
    <property type="term" value="C:tRNA methyltransferase complex"/>
    <property type="evidence" value="ECO:0007669"/>
    <property type="project" value="TreeGrafter"/>
</dbReference>
<dbReference type="GO" id="GO:0008176">
    <property type="term" value="F:tRNA (guanine(46)-N7)-methyltransferase activity"/>
    <property type="evidence" value="ECO:0007669"/>
    <property type="project" value="UniProtKB-UniRule"/>
</dbReference>
<dbReference type="Gene3D" id="3.40.50.150">
    <property type="entry name" value="Vaccinia Virus protein VP39"/>
    <property type="match status" value="1"/>
</dbReference>
<dbReference type="HAMAP" id="MF_01057">
    <property type="entry name" value="tRNA_methyltr_TrmB"/>
    <property type="match status" value="1"/>
</dbReference>
<dbReference type="InterPro" id="IPR029063">
    <property type="entry name" value="SAM-dependent_MTases_sf"/>
</dbReference>
<dbReference type="InterPro" id="IPR003358">
    <property type="entry name" value="tRNA_(Gua-N-7)_MeTrfase_Trmb"/>
</dbReference>
<dbReference type="InterPro" id="IPR055361">
    <property type="entry name" value="tRNA_methyltr_TrmB_bact"/>
</dbReference>
<dbReference type="NCBIfam" id="NF001080">
    <property type="entry name" value="PRK00121.2-2"/>
    <property type="match status" value="1"/>
</dbReference>
<dbReference type="NCBIfam" id="TIGR00091">
    <property type="entry name" value="tRNA (guanosine(46)-N7)-methyltransferase TrmB"/>
    <property type="match status" value="1"/>
</dbReference>
<dbReference type="PANTHER" id="PTHR23417">
    <property type="entry name" value="3-DEOXY-D-MANNO-OCTULOSONIC-ACID TRANSFERASE/TRNA GUANINE-N 7 - -METHYLTRANSFERASE"/>
    <property type="match status" value="1"/>
</dbReference>
<dbReference type="PANTHER" id="PTHR23417:SF14">
    <property type="entry name" value="PENTACOTRIPEPTIDE-REPEAT REGION OF PRORP DOMAIN-CONTAINING PROTEIN"/>
    <property type="match status" value="1"/>
</dbReference>
<dbReference type="Pfam" id="PF02390">
    <property type="entry name" value="Methyltransf_4"/>
    <property type="match status" value="1"/>
</dbReference>
<dbReference type="SUPFAM" id="SSF53335">
    <property type="entry name" value="S-adenosyl-L-methionine-dependent methyltransferases"/>
    <property type="match status" value="1"/>
</dbReference>
<dbReference type="PROSITE" id="PS51625">
    <property type="entry name" value="SAM_MT_TRMB"/>
    <property type="match status" value="1"/>
</dbReference>
<evidence type="ECO:0000250" key="1"/>
<evidence type="ECO:0000255" key="2">
    <source>
        <dbReference type="HAMAP-Rule" id="MF_01057"/>
    </source>
</evidence>